<organism>
    <name type="scientific">Homo sapiens</name>
    <name type="common">Human</name>
    <dbReference type="NCBI Taxonomy" id="9606"/>
    <lineage>
        <taxon>Eukaryota</taxon>
        <taxon>Metazoa</taxon>
        <taxon>Chordata</taxon>
        <taxon>Craniata</taxon>
        <taxon>Vertebrata</taxon>
        <taxon>Euteleostomi</taxon>
        <taxon>Mammalia</taxon>
        <taxon>Eutheria</taxon>
        <taxon>Euarchontoglires</taxon>
        <taxon>Primates</taxon>
        <taxon>Haplorrhini</taxon>
        <taxon>Catarrhini</taxon>
        <taxon>Hominidae</taxon>
        <taxon>Homo</taxon>
    </lineage>
</organism>
<keyword id="KW-0223">Dioxygenase</keyword>
<keyword id="KW-0472">Membrane</keyword>
<keyword id="KW-0560">Oxidoreductase</keyword>
<keyword id="KW-0597">Phosphoprotein</keyword>
<keyword id="KW-1267">Proteomics identification</keyword>
<keyword id="KW-1185">Reference proteome</keyword>
<keyword id="KW-0735">Signal-anchor</keyword>
<keyword id="KW-0812">Transmembrane</keyword>
<keyword id="KW-1133">Transmembrane helix</keyword>
<dbReference type="EC" id="1.14.11.-"/>
<dbReference type="EMBL" id="AC120114">
    <property type="status" value="NOT_ANNOTATED_CDS"/>
    <property type="molecule type" value="Genomic_DNA"/>
</dbReference>
<dbReference type="EMBL" id="BC009033">
    <property type="protein sequence ID" value="AAH09033.1"/>
    <property type="molecule type" value="mRNA"/>
</dbReference>
<dbReference type="EMBL" id="BC029136">
    <property type="protein sequence ID" value="AAH29136.3"/>
    <property type="molecule type" value="mRNA"/>
</dbReference>
<dbReference type="EMBL" id="BC040933">
    <property type="protein sequence ID" value="AAH40933.3"/>
    <property type="molecule type" value="mRNA"/>
</dbReference>
<dbReference type="EMBL" id="BC085011">
    <property type="protein sequence ID" value="AAH85011.1"/>
    <property type="molecule type" value="mRNA"/>
</dbReference>
<dbReference type="EMBL" id="BC126319">
    <property type="protein sequence ID" value="AAI26320.1"/>
    <property type="molecule type" value="mRNA"/>
</dbReference>
<dbReference type="EMBL" id="BC126321">
    <property type="protein sequence ID" value="AAI26322.1"/>
    <property type="molecule type" value="mRNA"/>
</dbReference>
<dbReference type="EMBL" id="BC144152">
    <property type="protein sequence ID" value="AAI44153.1"/>
    <property type="molecule type" value="mRNA"/>
</dbReference>
<dbReference type="CCDS" id="CCDS10660.1"/>
<dbReference type="RefSeq" id="NP_859069.2">
    <property type="nucleotide sequence ID" value="NM_181718.3"/>
</dbReference>
<dbReference type="SMR" id="Q5U4P2"/>
<dbReference type="BioGRID" id="129003">
    <property type="interactions" value="7"/>
</dbReference>
<dbReference type="FunCoup" id="Q5U4P2">
    <property type="interactions" value="57"/>
</dbReference>
<dbReference type="IntAct" id="Q5U4P2">
    <property type="interactions" value="2"/>
</dbReference>
<dbReference type="MINT" id="Q5U4P2"/>
<dbReference type="STRING" id="9606.ENSP00000311447"/>
<dbReference type="GlyGen" id="Q5U4P2">
    <property type="glycosylation" value="1 site, 1 N-linked glycan (1 site)"/>
</dbReference>
<dbReference type="iPTMnet" id="Q5U4P2"/>
<dbReference type="PhosphoSitePlus" id="Q5U4P2"/>
<dbReference type="SwissPalm" id="Q5U4P2"/>
<dbReference type="BioMuta" id="ASPHD1"/>
<dbReference type="DMDM" id="215274179"/>
<dbReference type="jPOST" id="Q5U4P2"/>
<dbReference type="MassIVE" id="Q5U4P2"/>
<dbReference type="PaxDb" id="9606-ENSP00000311447"/>
<dbReference type="PeptideAtlas" id="Q5U4P2"/>
<dbReference type="ProteomicsDB" id="65227"/>
<dbReference type="Pumba" id="Q5U4P2"/>
<dbReference type="Antibodypedia" id="26891">
    <property type="antibodies" value="51 antibodies from 12 providers"/>
</dbReference>
<dbReference type="DNASU" id="253982"/>
<dbReference type="Ensembl" id="ENST00000308748.10">
    <property type="protein sequence ID" value="ENSP00000311447.5"/>
    <property type="gene ID" value="ENSG00000174939.11"/>
</dbReference>
<dbReference type="Ensembl" id="ENST00000414952.6">
    <property type="protein sequence ID" value="ENSP00000388036.2"/>
    <property type="gene ID" value="ENSG00000174939.11"/>
</dbReference>
<dbReference type="Ensembl" id="ENST00000566693.1">
    <property type="protein sequence ID" value="ENSP00000456801.1"/>
    <property type="gene ID" value="ENSG00000174939.11"/>
</dbReference>
<dbReference type="GeneID" id="253982"/>
<dbReference type="KEGG" id="hsa:253982"/>
<dbReference type="MANE-Select" id="ENST00000308748.10">
    <property type="protein sequence ID" value="ENSP00000311447.5"/>
    <property type="RefSeq nucleotide sequence ID" value="NM_181718.4"/>
    <property type="RefSeq protein sequence ID" value="NP_859069.2"/>
</dbReference>
<dbReference type="UCSC" id="uc002dut.4">
    <property type="organism name" value="human"/>
</dbReference>
<dbReference type="AGR" id="HGNC:27380"/>
<dbReference type="CTD" id="253982"/>
<dbReference type="DisGeNET" id="253982"/>
<dbReference type="GeneCards" id="ASPHD1"/>
<dbReference type="HGNC" id="HGNC:27380">
    <property type="gene designation" value="ASPHD1"/>
</dbReference>
<dbReference type="HPA" id="ENSG00000174939">
    <property type="expression patterns" value="Tissue enriched (brain)"/>
</dbReference>
<dbReference type="neXtProt" id="NX_Q5U4P2"/>
<dbReference type="OpenTargets" id="ENSG00000174939"/>
<dbReference type="PharmGKB" id="PA143485313"/>
<dbReference type="VEuPathDB" id="HostDB:ENSG00000174939"/>
<dbReference type="eggNOG" id="KOG3696">
    <property type="taxonomic scope" value="Eukaryota"/>
</dbReference>
<dbReference type="GeneTree" id="ENSGT00940000161676"/>
<dbReference type="HOGENOM" id="CLU_059279_3_0_1"/>
<dbReference type="InParanoid" id="Q5U4P2"/>
<dbReference type="OMA" id="WGLEDAP"/>
<dbReference type="OrthoDB" id="438431at2759"/>
<dbReference type="PAN-GO" id="Q5U4P2">
    <property type="GO annotations" value="0 GO annotations based on evolutionary models"/>
</dbReference>
<dbReference type="PhylomeDB" id="Q5U4P2"/>
<dbReference type="TreeFam" id="TF312799"/>
<dbReference type="PathwayCommons" id="Q5U4P2"/>
<dbReference type="SignaLink" id="Q5U4P2"/>
<dbReference type="BioGRID-ORCS" id="253982">
    <property type="hits" value="16 hits in 1152 CRISPR screens"/>
</dbReference>
<dbReference type="ChiTaRS" id="ASPHD1">
    <property type="organism name" value="human"/>
</dbReference>
<dbReference type="GenomeRNAi" id="253982"/>
<dbReference type="Pharos" id="Q5U4P2">
    <property type="development level" value="Tdark"/>
</dbReference>
<dbReference type="PRO" id="PR:Q5U4P2"/>
<dbReference type="Proteomes" id="UP000005640">
    <property type="component" value="Chromosome 16"/>
</dbReference>
<dbReference type="RNAct" id="Q5U4P2">
    <property type="molecule type" value="protein"/>
</dbReference>
<dbReference type="Bgee" id="ENSG00000174939">
    <property type="expression patterns" value="Expressed in C1 segment of cervical spinal cord and 147 other cell types or tissues"/>
</dbReference>
<dbReference type="ExpressionAtlas" id="Q5U4P2">
    <property type="expression patterns" value="baseline and differential"/>
</dbReference>
<dbReference type="GO" id="GO:0016020">
    <property type="term" value="C:membrane"/>
    <property type="evidence" value="ECO:0007669"/>
    <property type="project" value="UniProtKB-SubCell"/>
</dbReference>
<dbReference type="GO" id="GO:0051213">
    <property type="term" value="F:dioxygenase activity"/>
    <property type="evidence" value="ECO:0007669"/>
    <property type="project" value="UniProtKB-KW"/>
</dbReference>
<dbReference type="Gene3D" id="2.60.120.330">
    <property type="entry name" value="B-lactam Antibiotic, Isopenicillin N Synthase, Chain"/>
    <property type="match status" value="1"/>
</dbReference>
<dbReference type="InterPro" id="IPR007803">
    <property type="entry name" value="Asp/Arg/Pro-Hydrxlase"/>
</dbReference>
<dbReference type="InterPro" id="IPR051821">
    <property type="entry name" value="Asp/Asn_beta-hydroxylase"/>
</dbReference>
<dbReference type="InterPro" id="IPR027443">
    <property type="entry name" value="IPNS-like_sf"/>
</dbReference>
<dbReference type="PANTHER" id="PTHR46332:SF1">
    <property type="entry name" value="ASPARTATE BETA-HYDROXYLASE DOMAIN-CONTAINING PROTEIN 1"/>
    <property type="match status" value="1"/>
</dbReference>
<dbReference type="PANTHER" id="PTHR46332">
    <property type="entry name" value="ASPARTATE BETA-HYDROXYLASE DOMAIN-CONTAINING PROTEIN 2"/>
    <property type="match status" value="1"/>
</dbReference>
<dbReference type="Pfam" id="PF05118">
    <property type="entry name" value="Asp_Arg_Hydrox"/>
    <property type="match status" value="1"/>
</dbReference>
<dbReference type="SUPFAM" id="SSF51197">
    <property type="entry name" value="Clavaminate synthase-like"/>
    <property type="match status" value="1"/>
</dbReference>
<name>ASPH1_HUMAN</name>
<evidence type="ECO:0000255" key="1"/>
<evidence type="ECO:0000256" key="2">
    <source>
        <dbReference type="SAM" id="MobiDB-lite"/>
    </source>
</evidence>
<evidence type="ECO:0000305" key="3"/>
<evidence type="ECO:0007744" key="4">
    <source>
    </source>
</evidence>
<reference key="1">
    <citation type="journal article" date="2004" name="Nature">
        <title>The sequence and analysis of duplication-rich human chromosome 16.</title>
        <authorList>
            <person name="Martin J."/>
            <person name="Han C."/>
            <person name="Gordon L.A."/>
            <person name="Terry A."/>
            <person name="Prabhakar S."/>
            <person name="She X."/>
            <person name="Xie G."/>
            <person name="Hellsten U."/>
            <person name="Chan Y.M."/>
            <person name="Altherr M."/>
            <person name="Couronne O."/>
            <person name="Aerts A."/>
            <person name="Bajorek E."/>
            <person name="Black S."/>
            <person name="Blumer H."/>
            <person name="Branscomb E."/>
            <person name="Brown N.C."/>
            <person name="Bruno W.J."/>
            <person name="Buckingham J.M."/>
            <person name="Callen D.F."/>
            <person name="Campbell C.S."/>
            <person name="Campbell M.L."/>
            <person name="Campbell E.W."/>
            <person name="Caoile C."/>
            <person name="Challacombe J.F."/>
            <person name="Chasteen L.A."/>
            <person name="Chertkov O."/>
            <person name="Chi H.C."/>
            <person name="Christensen M."/>
            <person name="Clark L.M."/>
            <person name="Cohn J.D."/>
            <person name="Denys M."/>
            <person name="Detter J.C."/>
            <person name="Dickson M."/>
            <person name="Dimitrijevic-Bussod M."/>
            <person name="Escobar J."/>
            <person name="Fawcett J.J."/>
            <person name="Flowers D."/>
            <person name="Fotopulos D."/>
            <person name="Glavina T."/>
            <person name="Gomez M."/>
            <person name="Gonzales E."/>
            <person name="Goodstein D."/>
            <person name="Goodwin L.A."/>
            <person name="Grady D.L."/>
            <person name="Grigoriev I."/>
            <person name="Groza M."/>
            <person name="Hammon N."/>
            <person name="Hawkins T."/>
            <person name="Haydu L."/>
            <person name="Hildebrand C.E."/>
            <person name="Huang W."/>
            <person name="Israni S."/>
            <person name="Jett J."/>
            <person name="Jewett P.B."/>
            <person name="Kadner K."/>
            <person name="Kimball H."/>
            <person name="Kobayashi A."/>
            <person name="Krawczyk M.-C."/>
            <person name="Leyba T."/>
            <person name="Longmire J.L."/>
            <person name="Lopez F."/>
            <person name="Lou Y."/>
            <person name="Lowry S."/>
            <person name="Ludeman T."/>
            <person name="Manohar C.F."/>
            <person name="Mark G.A."/>
            <person name="McMurray K.L."/>
            <person name="Meincke L.J."/>
            <person name="Morgan J."/>
            <person name="Moyzis R.K."/>
            <person name="Mundt M.O."/>
            <person name="Munk A.C."/>
            <person name="Nandkeshwar R.D."/>
            <person name="Pitluck S."/>
            <person name="Pollard M."/>
            <person name="Predki P."/>
            <person name="Parson-Quintana B."/>
            <person name="Ramirez L."/>
            <person name="Rash S."/>
            <person name="Retterer J."/>
            <person name="Ricke D.O."/>
            <person name="Robinson D.L."/>
            <person name="Rodriguez A."/>
            <person name="Salamov A."/>
            <person name="Saunders E.H."/>
            <person name="Scott D."/>
            <person name="Shough T."/>
            <person name="Stallings R.L."/>
            <person name="Stalvey M."/>
            <person name="Sutherland R.D."/>
            <person name="Tapia R."/>
            <person name="Tesmer J.G."/>
            <person name="Thayer N."/>
            <person name="Thompson L.S."/>
            <person name="Tice H."/>
            <person name="Torney D.C."/>
            <person name="Tran-Gyamfi M."/>
            <person name="Tsai M."/>
            <person name="Ulanovsky L.E."/>
            <person name="Ustaszewska A."/>
            <person name="Vo N."/>
            <person name="White P.S."/>
            <person name="Williams A.L."/>
            <person name="Wills P.L."/>
            <person name="Wu J.-R."/>
            <person name="Wu K."/>
            <person name="Yang J."/>
            <person name="DeJong P."/>
            <person name="Bruce D."/>
            <person name="Doggett N.A."/>
            <person name="Deaven L."/>
            <person name="Schmutz J."/>
            <person name="Grimwood J."/>
            <person name="Richardson P."/>
            <person name="Rokhsar D.S."/>
            <person name="Eichler E.E."/>
            <person name="Gilna P."/>
            <person name="Lucas S.M."/>
            <person name="Myers R.M."/>
            <person name="Rubin E.M."/>
            <person name="Pennacchio L.A."/>
        </authorList>
    </citation>
    <scope>NUCLEOTIDE SEQUENCE [LARGE SCALE GENOMIC DNA]</scope>
</reference>
<reference key="2">
    <citation type="journal article" date="2004" name="Genome Res.">
        <title>The status, quality, and expansion of the NIH full-length cDNA project: the Mammalian Gene Collection (MGC).</title>
        <authorList>
            <consortium name="The MGC Project Team"/>
        </authorList>
    </citation>
    <scope>NUCLEOTIDE SEQUENCE [LARGE SCALE MRNA]</scope>
    <source>
        <tissue>Brain</tissue>
        <tissue>Colon</tissue>
        <tissue>Pancreas</tissue>
    </source>
</reference>
<reference key="3">
    <citation type="journal article" date="2008" name="Mol. Cell">
        <title>Kinase-selective enrichment enables quantitative phosphoproteomics of the kinome across the cell cycle.</title>
        <authorList>
            <person name="Daub H."/>
            <person name="Olsen J.V."/>
            <person name="Bairlein M."/>
            <person name="Gnad F."/>
            <person name="Oppermann F.S."/>
            <person name="Korner R."/>
            <person name="Greff Z."/>
            <person name="Keri G."/>
            <person name="Stemmann O."/>
            <person name="Mann M."/>
        </authorList>
    </citation>
    <scope>PHOSPHORYLATION [LARGE SCALE ANALYSIS] AT SER-129</scope>
    <scope>IDENTIFICATION BY MASS SPECTROMETRY [LARGE SCALE ANALYSIS]</scope>
    <source>
        <tissue>Cervix carcinoma</tissue>
    </source>
</reference>
<comment type="subcellular location">
    <subcellularLocation>
        <location evidence="3">Membrane</location>
        <topology evidence="3">Single-pass type II membrane protein</topology>
    </subcellularLocation>
</comment>
<comment type="similarity">
    <text evidence="3">Belongs to the aspartyl/asparaginyl beta-hydroxylase family.</text>
</comment>
<protein>
    <recommendedName>
        <fullName>Aspartate beta-hydroxylase domain-containing protein 1</fullName>
        <ecNumber>1.14.11.-</ecNumber>
    </recommendedName>
</protein>
<sequence>MKEGRGSFSVERGPRKERETAQSGMWKGNSPAGSQGAAMEGTGGELGGQGNWGPEDAPGLLARASLIMLPWPLPLASSALTLLFGALTSLFLWYCYRLGSQDMQALGAGSRAGGVRGGPVGCSEAGGPSPGGPGDPGEGPRTEGLVSRRLRAYARRYSWAGMGRVRRAAQGGPGPGRGPGVLGIQRPGLLFLPDLPSAPFVPRDAQRHDVELLESSFPAILRDFGAVSWDFSGTTPPPRGWSPPLAPGCYQLLLYQAGRCQPSNCRRCPGAYRALRGLRSFMSANTFGNAGFSVLLPGARLEGRCGPTNARVRCHLGLKIPPGCELVVGGEPQCWAEGHCLLVDDSFLHTVAHNGSPEDGPRVVFIVDLWHPNVAGAERQALDFVFAPDP</sequence>
<gene>
    <name type="primary">ASPHD1</name>
</gene>
<accession>Q5U4P2</accession>
<accession>A0AVE3</accession>
<accession>B7ZLZ3</accession>
<accession>Q8IW63</accession>
<accession>Q8N316</accession>
<accession>Q96H00</accession>
<feature type="chain" id="PRO_0000254595" description="Aspartate beta-hydroxylase domain-containing protein 1">
    <location>
        <begin position="1"/>
        <end position="390"/>
    </location>
</feature>
<feature type="topological domain" description="Cytoplasmic" evidence="1">
    <location>
        <begin position="1"/>
        <end position="72"/>
    </location>
</feature>
<feature type="transmembrane region" description="Helical" evidence="1">
    <location>
        <begin position="73"/>
        <end position="95"/>
    </location>
</feature>
<feature type="topological domain" description="Lumenal" evidence="1">
    <location>
        <begin position="96"/>
        <end position="390"/>
    </location>
</feature>
<feature type="region of interest" description="Disordered" evidence="2">
    <location>
        <begin position="1"/>
        <end position="54"/>
    </location>
</feature>
<feature type="region of interest" description="Disordered" evidence="2">
    <location>
        <begin position="116"/>
        <end position="143"/>
    </location>
</feature>
<feature type="compositionally biased region" description="Gly residues" evidence="2">
    <location>
        <begin position="41"/>
        <end position="51"/>
    </location>
</feature>
<feature type="compositionally biased region" description="Gly residues" evidence="2">
    <location>
        <begin position="128"/>
        <end position="137"/>
    </location>
</feature>
<feature type="modified residue" description="Phosphoserine" evidence="4">
    <location>
        <position position="129"/>
    </location>
</feature>
<feature type="sequence conflict" description="In Ref. 2; AAI44153." evidence="3" ref="2">
    <original>G</original>
    <variation>GG</variation>
    <location>
        <position position="172"/>
    </location>
</feature>
<proteinExistence type="evidence at protein level"/>